<reference key="1">
    <citation type="submission" date="2007-07" db="EMBL/GenBank/DDBJ databases">
        <title>Complete sequence of chromosome of Xanthobacter autotrophicus Py2.</title>
        <authorList>
            <consortium name="US DOE Joint Genome Institute"/>
            <person name="Copeland A."/>
            <person name="Lucas S."/>
            <person name="Lapidus A."/>
            <person name="Barry K."/>
            <person name="Glavina del Rio T."/>
            <person name="Hammon N."/>
            <person name="Israni S."/>
            <person name="Dalin E."/>
            <person name="Tice H."/>
            <person name="Pitluck S."/>
            <person name="Sims D."/>
            <person name="Brettin T."/>
            <person name="Bruce D."/>
            <person name="Detter J.C."/>
            <person name="Han C."/>
            <person name="Tapia R."/>
            <person name="Brainard J."/>
            <person name="Schmutz J."/>
            <person name="Larimer F."/>
            <person name="Land M."/>
            <person name="Hauser L."/>
            <person name="Kyrpides N."/>
            <person name="Kim E."/>
            <person name="Ensigns S.A."/>
            <person name="Richardson P."/>
        </authorList>
    </citation>
    <scope>NUCLEOTIDE SEQUENCE [LARGE SCALE GENOMIC DNA]</scope>
    <source>
        <strain>ATCC BAA-1158 / Py2</strain>
    </source>
</reference>
<organism>
    <name type="scientific">Xanthobacter autotrophicus (strain ATCC BAA-1158 / Py2)</name>
    <dbReference type="NCBI Taxonomy" id="78245"/>
    <lineage>
        <taxon>Bacteria</taxon>
        <taxon>Pseudomonadati</taxon>
        <taxon>Pseudomonadota</taxon>
        <taxon>Alphaproteobacteria</taxon>
        <taxon>Hyphomicrobiales</taxon>
        <taxon>Xanthobacteraceae</taxon>
        <taxon>Xanthobacter</taxon>
    </lineage>
</organism>
<comment type="function">
    <text evidence="1">Catalyzes the radical-mediated insertion of two sulfur atoms into the C-6 and C-8 positions of the octanoyl moiety bound to the lipoyl domains of lipoate-dependent enzymes, thereby converting the octanoylated domains into lipoylated derivatives.</text>
</comment>
<comment type="catalytic activity">
    <reaction evidence="1">
        <text>[[Fe-S] cluster scaffold protein carrying a second [4Fe-4S](2+) cluster] + N(6)-octanoyl-L-lysyl-[protein] + 2 oxidized [2Fe-2S]-[ferredoxin] + 2 S-adenosyl-L-methionine + 4 H(+) = [[Fe-S] cluster scaffold protein] + N(6)-[(R)-dihydrolipoyl]-L-lysyl-[protein] + 4 Fe(3+) + 2 hydrogen sulfide + 2 5'-deoxyadenosine + 2 L-methionine + 2 reduced [2Fe-2S]-[ferredoxin]</text>
        <dbReference type="Rhea" id="RHEA:16585"/>
        <dbReference type="Rhea" id="RHEA-COMP:9928"/>
        <dbReference type="Rhea" id="RHEA-COMP:10000"/>
        <dbReference type="Rhea" id="RHEA-COMP:10001"/>
        <dbReference type="Rhea" id="RHEA-COMP:10475"/>
        <dbReference type="Rhea" id="RHEA-COMP:14568"/>
        <dbReference type="Rhea" id="RHEA-COMP:14569"/>
        <dbReference type="ChEBI" id="CHEBI:15378"/>
        <dbReference type="ChEBI" id="CHEBI:17319"/>
        <dbReference type="ChEBI" id="CHEBI:29034"/>
        <dbReference type="ChEBI" id="CHEBI:29919"/>
        <dbReference type="ChEBI" id="CHEBI:33722"/>
        <dbReference type="ChEBI" id="CHEBI:33737"/>
        <dbReference type="ChEBI" id="CHEBI:33738"/>
        <dbReference type="ChEBI" id="CHEBI:57844"/>
        <dbReference type="ChEBI" id="CHEBI:59789"/>
        <dbReference type="ChEBI" id="CHEBI:78809"/>
        <dbReference type="ChEBI" id="CHEBI:83100"/>
        <dbReference type="EC" id="2.8.1.8"/>
    </reaction>
</comment>
<comment type="cofactor">
    <cofactor evidence="1">
        <name>[4Fe-4S] cluster</name>
        <dbReference type="ChEBI" id="CHEBI:49883"/>
    </cofactor>
    <text evidence="1">Binds 2 [4Fe-4S] clusters per subunit. One cluster is coordinated with 3 cysteines and an exchangeable S-adenosyl-L-methionine.</text>
</comment>
<comment type="pathway">
    <text evidence="1">Protein modification; protein lipoylation via endogenous pathway; protein N(6)-(lipoyl)lysine from octanoyl-[acyl-carrier-protein]: step 2/2.</text>
</comment>
<comment type="subcellular location">
    <subcellularLocation>
        <location evidence="1">Cytoplasm</location>
    </subcellularLocation>
</comment>
<comment type="similarity">
    <text evidence="1">Belongs to the radical SAM superfamily. Lipoyl synthase family.</text>
</comment>
<protein>
    <recommendedName>
        <fullName evidence="1">Lipoyl synthase</fullName>
        <ecNumber evidence="1">2.8.1.8</ecNumber>
    </recommendedName>
    <alternativeName>
        <fullName evidence="1">Lip-syn</fullName>
        <shortName evidence="1">LS</shortName>
    </alternativeName>
    <alternativeName>
        <fullName evidence="1">Lipoate synthase</fullName>
    </alternativeName>
    <alternativeName>
        <fullName evidence="1">Lipoic acid synthase</fullName>
    </alternativeName>
    <alternativeName>
        <fullName evidence="1">Sulfur insertion protein LipA</fullName>
    </alternativeName>
</protein>
<gene>
    <name evidence="1" type="primary">lipA</name>
    <name type="ordered locus">Xaut_3897</name>
</gene>
<name>LIPA_XANP2</name>
<feature type="chain" id="PRO_1000099643" description="Lipoyl synthase">
    <location>
        <begin position="1"/>
        <end position="317"/>
    </location>
</feature>
<feature type="domain" description="Radical SAM core" evidence="2">
    <location>
        <begin position="69"/>
        <end position="285"/>
    </location>
</feature>
<feature type="region of interest" description="Disordered" evidence="3">
    <location>
        <begin position="1"/>
        <end position="21"/>
    </location>
</feature>
<feature type="compositionally biased region" description="Basic and acidic residues" evidence="3">
    <location>
        <begin position="12"/>
        <end position="21"/>
    </location>
</feature>
<feature type="binding site" evidence="1">
    <location>
        <position position="57"/>
    </location>
    <ligand>
        <name>[4Fe-4S] cluster</name>
        <dbReference type="ChEBI" id="CHEBI:49883"/>
        <label>1</label>
    </ligand>
</feature>
<feature type="binding site" evidence="1">
    <location>
        <position position="62"/>
    </location>
    <ligand>
        <name>[4Fe-4S] cluster</name>
        <dbReference type="ChEBI" id="CHEBI:49883"/>
        <label>1</label>
    </ligand>
</feature>
<feature type="binding site" evidence="1">
    <location>
        <position position="68"/>
    </location>
    <ligand>
        <name>[4Fe-4S] cluster</name>
        <dbReference type="ChEBI" id="CHEBI:49883"/>
        <label>1</label>
    </ligand>
</feature>
<feature type="binding site" evidence="1">
    <location>
        <position position="83"/>
    </location>
    <ligand>
        <name>[4Fe-4S] cluster</name>
        <dbReference type="ChEBI" id="CHEBI:49883"/>
        <label>2</label>
        <note>4Fe-4S-S-AdoMet</note>
    </ligand>
</feature>
<feature type="binding site" evidence="1">
    <location>
        <position position="87"/>
    </location>
    <ligand>
        <name>[4Fe-4S] cluster</name>
        <dbReference type="ChEBI" id="CHEBI:49883"/>
        <label>2</label>
        <note>4Fe-4S-S-AdoMet</note>
    </ligand>
</feature>
<feature type="binding site" evidence="1">
    <location>
        <position position="90"/>
    </location>
    <ligand>
        <name>[4Fe-4S] cluster</name>
        <dbReference type="ChEBI" id="CHEBI:49883"/>
        <label>2</label>
        <note>4Fe-4S-S-AdoMet</note>
    </ligand>
</feature>
<feature type="binding site" evidence="1">
    <location>
        <position position="296"/>
    </location>
    <ligand>
        <name>[4Fe-4S] cluster</name>
        <dbReference type="ChEBI" id="CHEBI:49883"/>
        <label>1</label>
    </ligand>
</feature>
<proteinExistence type="inferred from homology"/>
<accession>A7IM78</accession>
<keyword id="KW-0004">4Fe-4S</keyword>
<keyword id="KW-0963">Cytoplasm</keyword>
<keyword id="KW-0408">Iron</keyword>
<keyword id="KW-0411">Iron-sulfur</keyword>
<keyword id="KW-0479">Metal-binding</keyword>
<keyword id="KW-1185">Reference proteome</keyword>
<keyword id="KW-0949">S-adenosyl-L-methionine</keyword>
<keyword id="KW-0808">Transferase</keyword>
<evidence type="ECO:0000255" key="1">
    <source>
        <dbReference type="HAMAP-Rule" id="MF_00206"/>
    </source>
</evidence>
<evidence type="ECO:0000255" key="2">
    <source>
        <dbReference type="PROSITE-ProRule" id="PRU01266"/>
    </source>
</evidence>
<evidence type="ECO:0000256" key="3">
    <source>
        <dbReference type="SAM" id="MobiDB-lite"/>
    </source>
</evidence>
<sequence length="317" mass="34982">MVTVIDTLARPRHPEKANRPETEVLRKPDWIRVKAPGSAGWSQTAEIVRANGLHTVCEEAGCPNIGECWEKKHATFMIMGDTCTRACAFCNVRTGMPEALDQGEPQKVGDAVAKLGLSHVVITSVDRDDLADGGAEHFARTIAAIRKASPGTTIEILTPDFLRKDGALEVVVAARPDVFNHNLETVPAKYLSVRPGARYFHSLRLLQKVKELDGSIFTKSGIMVGLGEERPEVLQLMDDLRSAEVDFITIGQYLQPTRKHHKVERFVTPDEFKAYETVAYAKGFLMVSASPLTRSSHHAGDDFEKLRAARVARLGRS</sequence>
<dbReference type="EC" id="2.8.1.8" evidence="1"/>
<dbReference type="EMBL" id="CP000781">
    <property type="protein sequence ID" value="ABS69121.1"/>
    <property type="molecule type" value="Genomic_DNA"/>
</dbReference>
<dbReference type="SMR" id="A7IM78"/>
<dbReference type="STRING" id="78245.Xaut_3897"/>
<dbReference type="KEGG" id="xau:Xaut_3897"/>
<dbReference type="eggNOG" id="COG0320">
    <property type="taxonomic scope" value="Bacteria"/>
</dbReference>
<dbReference type="HOGENOM" id="CLU_033144_2_1_5"/>
<dbReference type="OrthoDB" id="9787898at2"/>
<dbReference type="PhylomeDB" id="A7IM78"/>
<dbReference type="UniPathway" id="UPA00538">
    <property type="reaction ID" value="UER00593"/>
</dbReference>
<dbReference type="Proteomes" id="UP000002417">
    <property type="component" value="Chromosome"/>
</dbReference>
<dbReference type="GO" id="GO:0005737">
    <property type="term" value="C:cytoplasm"/>
    <property type="evidence" value="ECO:0007669"/>
    <property type="project" value="UniProtKB-SubCell"/>
</dbReference>
<dbReference type="GO" id="GO:0051539">
    <property type="term" value="F:4 iron, 4 sulfur cluster binding"/>
    <property type="evidence" value="ECO:0007669"/>
    <property type="project" value="UniProtKB-UniRule"/>
</dbReference>
<dbReference type="GO" id="GO:0016992">
    <property type="term" value="F:lipoate synthase activity"/>
    <property type="evidence" value="ECO:0007669"/>
    <property type="project" value="UniProtKB-UniRule"/>
</dbReference>
<dbReference type="GO" id="GO:0046872">
    <property type="term" value="F:metal ion binding"/>
    <property type="evidence" value="ECO:0007669"/>
    <property type="project" value="UniProtKB-KW"/>
</dbReference>
<dbReference type="CDD" id="cd01335">
    <property type="entry name" value="Radical_SAM"/>
    <property type="match status" value="1"/>
</dbReference>
<dbReference type="FunFam" id="3.20.20.70:FF:000186">
    <property type="entry name" value="Lipoyl synthase"/>
    <property type="match status" value="1"/>
</dbReference>
<dbReference type="Gene3D" id="3.20.20.70">
    <property type="entry name" value="Aldolase class I"/>
    <property type="match status" value="1"/>
</dbReference>
<dbReference type="HAMAP" id="MF_00206">
    <property type="entry name" value="Lipoyl_synth"/>
    <property type="match status" value="1"/>
</dbReference>
<dbReference type="InterPro" id="IPR013785">
    <property type="entry name" value="Aldolase_TIM"/>
</dbReference>
<dbReference type="InterPro" id="IPR006638">
    <property type="entry name" value="Elp3/MiaA/NifB-like_rSAM"/>
</dbReference>
<dbReference type="InterPro" id="IPR003698">
    <property type="entry name" value="Lipoyl_synth"/>
</dbReference>
<dbReference type="InterPro" id="IPR007197">
    <property type="entry name" value="rSAM"/>
</dbReference>
<dbReference type="NCBIfam" id="TIGR00510">
    <property type="entry name" value="lipA"/>
    <property type="match status" value="1"/>
</dbReference>
<dbReference type="NCBIfam" id="NF004019">
    <property type="entry name" value="PRK05481.1"/>
    <property type="match status" value="1"/>
</dbReference>
<dbReference type="NCBIfam" id="NF009544">
    <property type="entry name" value="PRK12928.1"/>
    <property type="match status" value="1"/>
</dbReference>
<dbReference type="PANTHER" id="PTHR10949">
    <property type="entry name" value="LIPOYL SYNTHASE"/>
    <property type="match status" value="1"/>
</dbReference>
<dbReference type="PANTHER" id="PTHR10949:SF0">
    <property type="entry name" value="LIPOYL SYNTHASE, MITOCHONDRIAL"/>
    <property type="match status" value="1"/>
</dbReference>
<dbReference type="Pfam" id="PF04055">
    <property type="entry name" value="Radical_SAM"/>
    <property type="match status" value="1"/>
</dbReference>
<dbReference type="PIRSF" id="PIRSF005963">
    <property type="entry name" value="Lipoyl_synth"/>
    <property type="match status" value="1"/>
</dbReference>
<dbReference type="SFLD" id="SFLDF00271">
    <property type="entry name" value="lipoyl_synthase"/>
    <property type="match status" value="1"/>
</dbReference>
<dbReference type="SFLD" id="SFLDS00029">
    <property type="entry name" value="Radical_SAM"/>
    <property type="match status" value="1"/>
</dbReference>
<dbReference type="SMART" id="SM00729">
    <property type="entry name" value="Elp3"/>
    <property type="match status" value="1"/>
</dbReference>
<dbReference type="SUPFAM" id="SSF102114">
    <property type="entry name" value="Radical SAM enzymes"/>
    <property type="match status" value="1"/>
</dbReference>
<dbReference type="PROSITE" id="PS51918">
    <property type="entry name" value="RADICAL_SAM"/>
    <property type="match status" value="1"/>
</dbReference>